<proteinExistence type="inferred from homology"/>
<feature type="chain" id="PRO_1000143458" description="ATP synthase subunit alpha">
    <location>
        <begin position="1"/>
        <end position="513"/>
    </location>
</feature>
<feature type="binding site" evidence="1">
    <location>
        <begin position="169"/>
        <end position="176"/>
    </location>
    <ligand>
        <name>ATP</name>
        <dbReference type="ChEBI" id="CHEBI:30616"/>
    </ligand>
</feature>
<feature type="site" description="Required for activity" evidence="1">
    <location>
        <position position="373"/>
    </location>
</feature>
<comment type="function">
    <text evidence="1">Produces ATP from ADP in the presence of a proton gradient across the membrane. The alpha chain is a regulatory subunit.</text>
</comment>
<comment type="catalytic activity">
    <reaction evidence="1">
        <text>ATP + H2O + 4 H(+)(in) = ADP + phosphate + 5 H(+)(out)</text>
        <dbReference type="Rhea" id="RHEA:57720"/>
        <dbReference type="ChEBI" id="CHEBI:15377"/>
        <dbReference type="ChEBI" id="CHEBI:15378"/>
        <dbReference type="ChEBI" id="CHEBI:30616"/>
        <dbReference type="ChEBI" id="CHEBI:43474"/>
        <dbReference type="ChEBI" id="CHEBI:456216"/>
        <dbReference type="EC" id="7.1.2.2"/>
    </reaction>
</comment>
<comment type="subunit">
    <text evidence="1">F-type ATPases have 2 components, CF(1) - the catalytic core - and CF(0) - the membrane proton channel. CF(1) has five subunits: alpha(3), beta(3), gamma(1), delta(1), epsilon(1). CF(0) has three main subunits: a(1), b(2) and c(9-12). The alpha and beta chains form an alternating ring which encloses part of the gamma chain. CF(1) is attached to CF(0) by a central stalk formed by the gamma and epsilon chains, while a peripheral stalk is formed by the delta and b chains.</text>
</comment>
<comment type="subcellular location">
    <subcellularLocation>
        <location evidence="1">Cell inner membrane</location>
        <topology evidence="1">Peripheral membrane protein</topology>
    </subcellularLocation>
</comment>
<comment type="similarity">
    <text evidence="1">Belongs to the ATPase alpha/beta chains family.</text>
</comment>
<protein>
    <recommendedName>
        <fullName evidence="1">ATP synthase subunit alpha</fullName>
        <ecNumber evidence="1">7.1.2.2</ecNumber>
    </recommendedName>
    <alternativeName>
        <fullName evidence="1">ATP synthase F1 sector subunit alpha</fullName>
    </alternativeName>
    <alternativeName>
        <fullName evidence="1">F-ATPase subunit alpha</fullName>
    </alternativeName>
</protein>
<evidence type="ECO:0000255" key="1">
    <source>
        <dbReference type="HAMAP-Rule" id="MF_01346"/>
    </source>
</evidence>
<keyword id="KW-0066">ATP synthesis</keyword>
<keyword id="KW-0067">ATP-binding</keyword>
<keyword id="KW-0997">Cell inner membrane</keyword>
<keyword id="KW-1003">Cell membrane</keyword>
<keyword id="KW-0139">CF(1)</keyword>
<keyword id="KW-0375">Hydrogen ion transport</keyword>
<keyword id="KW-0406">Ion transport</keyword>
<keyword id="KW-0472">Membrane</keyword>
<keyword id="KW-0547">Nucleotide-binding</keyword>
<keyword id="KW-1278">Translocase</keyword>
<keyword id="KW-0813">Transport</keyword>
<sequence>MQLNSTEISELIKQRIAQFNVVSEAHNEGTIVSVSDGIIRVHGLADVMQGEMIALPGNRYAIALNLERDSVGAVVMGPYADLAEGMKVKCTGRILEVPVGRGLLGRVVNTLGEPIDGKGSIENDGFSAVEAIAPGVIERQSVDEPVQTGYKSVDAMIPIGRGQRELIIGDRQTGKTALAIDAIINQRDSGIKCVYVAIGQKASTVANVVRKLEEHDALANTIVVVATASESAALQYLAPYSGCAMGEYFRDRGEDALIIYDDLSKQAVAYRQISLLLRRPPGREAYPGDVFYLHSRLLERAARVNAEYVEAFTKGEVKGKTGSLTALPIIETQAGDVSAFVPTNVISITDGQIFLESSLFNAGIRPAVNPGISVSRVGGAAQTKIMKKLSGGIRTALAQYRELAAFSQFASDLDDATRKQLSHGQKVTELLKQKQYAPMSVAQQSLVLFAAERGYLGDVELAKVGSFEAALLAFADREHAELLQQINQTGAYNDEIEAKLKGILDTFKATQSW</sequence>
<gene>
    <name evidence="1" type="primary">atpA</name>
    <name type="ordered locus">YpAngola_A4204</name>
</gene>
<name>ATPA_YERPG</name>
<reference key="1">
    <citation type="journal article" date="2010" name="J. Bacteriol.">
        <title>Genome sequence of the deep-rooted Yersinia pestis strain Angola reveals new insights into the evolution and pangenome of the plague bacterium.</title>
        <authorList>
            <person name="Eppinger M."/>
            <person name="Worsham P.L."/>
            <person name="Nikolich M.P."/>
            <person name="Riley D.R."/>
            <person name="Sebastian Y."/>
            <person name="Mou S."/>
            <person name="Achtman M."/>
            <person name="Lindler L.E."/>
            <person name="Ravel J."/>
        </authorList>
    </citation>
    <scope>NUCLEOTIDE SEQUENCE [LARGE SCALE GENOMIC DNA]</scope>
    <source>
        <strain>Angola</strain>
    </source>
</reference>
<dbReference type="EC" id="7.1.2.2" evidence="1"/>
<dbReference type="EMBL" id="CP000901">
    <property type="protein sequence ID" value="ABX87010.1"/>
    <property type="molecule type" value="Genomic_DNA"/>
</dbReference>
<dbReference type="RefSeq" id="WP_002220758.1">
    <property type="nucleotide sequence ID" value="NZ_CP009935.1"/>
</dbReference>
<dbReference type="SMR" id="A9R5U1"/>
<dbReference type="GeneID" id="96663461"/>
<dbReference type="KEGG" id="ypg:YpAngola_A4204"/>
<dbReference type="PATRIC" id="fig|349746.12.peg.941"/>
<dbReference type="GO" id="GO:0005886">
    <property type="term" value="C:plasma membrane"/>
    <property type="evidence" value="ECO:0007669"/>
    <property type="project" value="UniProtKB-SubCell"/>
</dbReference>
<dbReference type="GO" id="GO:0045259">
    <property type="term" value="C:proton-transporting ATP synthase complex"/>
    <property type="evidence" value="ECO:0007669"/>
    <property type="project" value="UniProtKB-KW"/>
</dbReference>
<dbReference type="GO" id="GO:0043531">
    <property type="term" value="F:ADP binding"/>
    <property type="evidence" value="ECO:0007669"/>
    <property type="project" value="TreeGrafter"/>
</dbReference>
<dbReference type="GO" id="GO:0005524">
    <property type="term" value="F:ATP binding"/>
    <property type="evidence" value="ECO:0007669"/>
    <property type="project" value="UniProtKB-UniRule"/>
</dbReference>
<dbReference type="GO" id="GO:0046933">
    <property type="term" value="F:proton-transporting ATP synthase activity, rotational mechanism"/>
    <property type="evidence" value="ECO:0007669"/>
    <property type="project" value="UniProtKB-UniRule"/>
</dbReference>
<dbReference type="CDD" id="cd18113">
    <property type="entry name" value="ATP-synt_F1_alpha_C"/>
    <property type="match status" value="1"/>
</dbReference>
<dbReference type="CDD" id="cd18116">
    <property type="entry name" value="ATP-synt_F1_alpha_N"/>
    <property type="match status" value="1"/>
</dbReference>
<dbReference type="CDD" id="cd01132">
    <property type="entry name" value="F1-ATPase_alpha_CD"/>
    <property type="match status" value="1"/>
</dbReference>
<dbReference type="FunFam" id="1.20.150.20:FF:000001">
    <property type="entry name" value="ATP synthase subunit alpha"/>
    <property type="match status" value="1"/>
</dbReference>
<dbReference type="FunFam" id="2.40.30.20:FF:000001">
    <property type="entry name" value="ATP synthase subunit alpha"/>
    <property type="match status" value="1"/>
</dbReference>
<dbReference type="FunFam" id="3.40.50.300:FF:000002">
    <property type="entry name" value="ATP synthase subunit alpha"/>
    <property type="match status" value="1"/>
</dbReference>
<dbReference type="Gene3D" id="2.40.30.20">
    <property type="match status" value="1"/>
</dbReference>
<dbReference type="Gene3D" id="1.20.150.20">
    <property type="entry name" value="ATP synthase alpha/beta chain, C-terminal domain"/>
    <property type="match status" value="1"/>
</dbReference>
<dbReference type="Gene3D" id="3.40.50.300">
    <property type="entry name" value="P-loop containing nucleotide triphosphate hydrolases"/>
    <property type="match status" value="1"/>
</dbReference>
<dbReference type="HAMAP" id="MF_01346">
    <property type="entry name" value="ATP_synth_alpha_bact"/>
    <property type="match status" value="1"/>
</dbReference>
<dbReference type="InterPro" id="IPR023366">
    <property type="entry name" value="ATP_synth_asu-like_sf"/>
</dbReference>
<dbReference type="InterPro" id="IPR000793">
    <property type="entry name" value="ATP_synth_asu_C"/>
</dbReference>
<dbReference type="InterPro" id="IPR038376">
    <property type="entry name" value="ATP_synth_asu_C_sf"/>
</dbReference>
<dbReference type="InterPro" id="IPR033732">
    <property type="entry name" value="ATP_synth_F1_a_nt-bd_dom"/>
</dbReference>
<dbReference type="InterPro" id="IPR005294">
    <property type="entry name" value="ATP_synth_F1_asu"/>
</dbReference>
<dbReference type="InterPro" id="IPR020003">
    <property type="entry name" value="ATPase_a/bsu_AS"/>
</dbReference>
<dbReference type="InterPro" id="IPR004100">
    <property type="entry name" value="ATPase_F1/V1/A1_a/bsu_N"/>
</dbReference>
<dbReference type="InterPro" id="IPR036121">
    <property type="entry name" value="ATPase_F1/V1/A1_a/bsu_N_sf"/>
</dbReference>
<dbReference type="InterPro" id="IPR000194">
    <property type="entry name" value="ATPase_F1/V1/A1_a/bsu_nucl-bd"/>
</dbReference>
<dbReference type="InterPro" id="IPR027417">
    <property type="entry name" value="P-loop_NTPase"/>
</dbReference>
<dbReference type="NCBIfam" id="TIGR00962">
    <property type="entry name" value="atpA"/>
    <property type="match status" value="1"/>
</dbReference>
<dbReference type="NCBIfam" id="NF009884">
    <property type="entry name" value="PRK13343.1"/>
    <property type="match status" value="1"/>
</dbReference>
<dbReference type="PANTHER" id="PTHR48082">
    <property type="entry name" value="ATP SYNTHASE SUBUNIT ALPHA, MITOCHONDRIAL"/>
    <property type="match status" value="1"/>
</dbReference>
<dbReference type="PANTHER" id="PTHR48082:SF2">
    <property type="entry name" value="ATP SYNTHASE SUBUNIT ALPHA, MITOCHONDRIAL"/>
    <property type="match status" value="1"/>
</dbReference>
<dbReference type="Pfam" id="PF00006">
    <property type="entry name" value="ATP-synt_ab"/>
    <property type="match status" value="1"/>
</dbReference>
<dbReference type="Pfam" id="PF00306">
    <property type="entry name" value="ATP-synt_ab_C"/>
    <property type="match status" value="1"/>
</dbReference>
<dbReference type="Pfam" id="PF02874">
    <property type="entry name" value="ATP-synt_ab_N"/>
    <property type="match status" value="1"/>
</dbReference>
<dbReference type="SUPFAM" id="SSF47917">
    <property type="entry name" value="C-terminal domain of alpha and beta subunits of F1 ATP synthase"/>
    <property type="match status" value="1"/>
</dbReference>
<dbReference type="SUPFAM" id="SSF50615">
    <property type="entry name" value="N-terminal domain of alpha and beta subunits of F1 ATP synthase"/>
    <property type="match status" value="1"/>
</dbReference>
<dbReference type="SUPFAM" id="SSF52540">
    <property type="entry name" value="P-loop containing nucleoside triphosphate hydrolases"/>
    <property type="match status" value="1"/>
</dbReference>
<dbReference type="PROSITE" id="PS00152">
    <property type="entry name" value="ATPASE_ALPHA_BETA"/>
    <property type="match status" value="1"/>
</dbReference>
<accession>A9R5U1</accession>
<organism>
    <name type="scientific">Yersinia pestis bv. Antiqua (strain Angola)</name>
    <dbReference type="NCBI Taxonomy" id="349746"/>
    <lineage>
        <taxon>Bacteria</taxon>
        <taxon>Pseudomonadati</taxon>
        <taxon>Pseudomonadota</taxon>
        <taxon>Gammaproteobacteria</taxon>
        <taxon>Enterobacterales</taxon>
        <taxon>Yersiniaceae</taxon>
        <taxon>Yersinia</taxon>
    </lineage>
</organism>